<organism>
    <name type="scientific">Rhizobium johnstonii (strain DSM 114642 / LMG 32736 / 3841)</name>
    <name type="common">Rhizobium leguminosarum bv. viciae</name>
    <dbReference type="NCBI Taxonomy" id="216596"/>
    <lineage>
        <taxon>Bacteria</taxon>
        <taxon>Pseudomonadati</taxon>
        <taxon>Pseudomonadota</taxon>
        <taxon>Alphaproteobacteria</taxon>
        <taxon>Hyphomicrobiales</taxon>
        <taxon>Rhizobiaceae</taxon>
        <taxon>Rhizobium/Agrobacterium group</taxon>
        <taxon>Rhizobium</taxon>
        <taxon>Rhizobium johnstonii</taxon>
    </lineage>
</organism>
<keyword id="KW-0067">ATP-binding</keyword>
<keyword id="KW-0119">Carbohydrate metabolism</keyword>
<keyword id="KW-0418">Kinase</keyword>
<keyword id="KW-0547">Nucleotide-binding</keyword>
<keyword id="KW-0808">Transferase</keyword>
<evidence type="ECO:0000255" key="1">
    <source>
        <dbReference type="HAMAP-Rule" id="MF_01270"/>
    </source>
</evidence>
<protein>
    <recommendedName>
        <fullName evidence="1">Anhydro-N-acetylmuramic acid kinase</fullName>
        <ecNumber evidence="1">2.7.1.170</ecNumber>
    </recommendedName>
    <alternativeName>
        <fullName evidence="1">AnhMurNAc kinase</fullName>
    </alternativeName>
</protein>
<name>ANMK_RHIJ3</name>
<gene>
    <name evidence="1" type="primary">anmK</name>
    <name type="ordered locus">RL2587</name>
</gene>
<proteinExistence type="inferred from homology"/>
<accession>Q1MG48</accession>
<dbReference type="EC" id="2.7.1.170" evidence="1"/>
<dbReference type="EMBL" id="AM236080">
    <property type="protein sequence ID" value="CAK08075.1"/>
    <property type="molecule type" value="Genomic_DNA"/>
</dbReference>
<dbReference type="RefSeq" id="WP_011652137.1">
    <property type="nucleotide sequence ID" value="NC_008380.1"/>
</dbReference>
<dbReference type="SMR" id="Q1MG48"/>
<dbReference type="EnsemblBacteria" id="CAK08075">
    <property type="protein sequence ID" value="CAK08075"/>
    <property type="gene ID" value="RL2587"/>
</dbReference>
<dbReference type="KEGG" id="rle:RL2587"/>
<dbReference type="eggNOG" id="COG2377">
    <property type="taxonomic scope" value="Bacteria"/>
</dbReference>
<dbReference type="HOGENOM" id="CLU_038782_3_0_5"/>
<dbReference type="UniPathway" id="UPA00343"/>
<dbReference type="UniPathway" id="UPA00544"/>
<dbReference type="Proteomes" id="UP000006575">
    <property type="component" value="Chromosome"/>
</dbReference>
<dbReference type="GO" id="GO:0005524">
    <property type="term" value="F:ATP binding"/>
    <property type="evidence" value="ECO:0007669"/>
    <property type="project" value="UniProtKB-UniRule"/>
</dbReference>
<dbReference type="GO" id="GO:0016301">
    <property type="term" value="F:kinase activity"/>
    <property type="evidence" value="ECO:0007669"/>
    <property type="project" value="UniProtKB-KW"/>
</dbReference>
<dbReference type="GO" id="GO:0016773">
    <property type="term" value="F:phosphotransferase activity, alcohol group as acceptor"/>
    <property type="evidence" value="ECO:0007669"/>
    <property type="project" value="UniProtKB-UniRule"/>
</dbReference>
<dbReference type="GO" id="GO:0097175">
    <property type="term" value="P:1,6-anhydro-N-acetyl-beta-muramic acid catabolic process"/>
    <property type="evidence" value="ECO:0007669"/>
    <property type="project" value="UniProtKB-UniRule"/>
</dbReference>
<dbReference type="GO" id="GO:0006040">
    <property type="term" value="P:amino sugar metabolic process"/>
    <property type="evidence" value="ECO:0007669"/>
    <property type="project" value="InterPro"/>
</dbReference>
<dbReference type="GO" id="GO:0009254">
    <property type="term" value="P:peptidoglycan turnover"/>
    <property type="evidence" value="ECO:0007669"/>
    <property type="project" value="UniProtKB-UniRule"/>
</dbReference>
<dbReference type="Gene3D" id="3.30.420.40">
    <property type="match status" value="2"/>
</dbReference>
<dbReference type="HAMAP" id="MF_01270">
    <property type="entry name" value="AnhMurNAc_kinase"/>
    <property type="match status" value="1"/>
</dbReference>
<dbReference type="InterPro" id="IPR005338">
    <property type="entry name" value="Anhydro_N_Ac-Mur_kinase"/>
</dbReference>
<dbReference type="InterPro" id="IPR043129">
    <property type="entry name" value="ATPase_NBD"/>
</dbReference>
<dbReference type="NCBIfam" id="NF007141">
    <property type="entry name" value="PRK09585.1-5"/>
    <property type="match status" value="1"/>
</dbReference>
<dbReference type="PANTHER" id="PTHR30605">
    <property type="entry name" value="ANHYDRO-N-ACETYLMURAMIC ACID KINASE"/>
    <property type="match status" value="1"/>
</dbReference>
<dbReference type="PANTHER" id="PTHR30605:SF0">
    <property type="entry name" value="ANHYDRO-N-ACETYLMURAMIC ACID KINASE"/>
    <property type="match status" value="1"/>
</dbReference>
<dbReference type="Pfam" id="PF03702">
    <property type="entry name" value="AnmK"/>
    <property type="match status" value="1"/>
</dbReference>
<dbReference type="SUPFAM" id="SSF53067">
    <property type="entry name" value="Actin-like ATPase domain"/>
    <property type="match status" value="1"/>
</dbReference>
<feature type="chain" id="PRO_0000250041" description="Anhydro-N-acetylmuramic acid kinase">
    <location>
        <begin position="1"/>
        <end position="372"/>
    </location>
</feature>
<feature type="binding site" evidence="1">
    <location>
        <begin position="13"/>
        <end position="20"/>
    </location>
    <ligand>
        <name>ATP</name>
        <dbReference type="ChEBI" id="CHEBI:30616"/>
    </ligand>
</feature>
<sequence>MDVIRTAIGLMSGTSMDGIDVALIRTDGRGFIERGPFMGVPYDADFRGQLKRALELSRPLTDRSERPAELREIELELTLRHAIAVTAFMERFGLAADAVDVLGFHGQTVLHRPDEGLTIQIGDGGELAKRTAISVVYDMRANDMVHGGQGAPLVPAYHAALAGKFQQAGQAVCFVNIGGISNLTFIGTDGRISAFDSGPGNTLIDQWVEMQTGRTYDPGGEIGGRGKVVASLAERYLQSPFFRGNVRRSLDRGDFAPLQSEEASLEDGARTLAHVAAASIIKSGGFLPETPALYIVCGGGRLNATLMAEFSVMAERLGSRVLTAEEAGFDGDAMEAEAWAYLAVRSLDGLPLTFPGTTGVGAPVTGGVLATP</sequence>
<comment type="function">
    <text evidence="1">Catalyzes the specific phosphorylation of 1,6-anhydro-N-acetylmuramic acid (anhMurNAc) with the simultaneous cleavage of the 1,6-anhydro ring, generating MurNAc-6-P. Is required for the utilization of anhMurNAc either imported from the medium or derived from its own cell wall murein, and thus plays a role in cell wall recycling.</text>
</comment>
<comment type="catalytic activity">
    <reaction evidence="1">
        <text>1,6-anhydro-N-acetyl-beta-muramate + ATP + H2O = N-acetyl-D-muramate 6-phosphate + ADP + H(+)</text>
        <dbReference type="Rhea" id="RHEA:24952"/>
        <dbReference type="ChEBI" id="CHEBI:15377"/>
        <dbReference type="ChEBI" id="CHEBI:15378"/>
        <dbReference type="ChEBI" id="CHEBI:30616"/>
        <dbReference type="ChEBI" id="CHEBI:58690"/>
        <dbReference type="ChEBI" id="CHEBI:58722"/>
        <dbReference type="ChEBI" id="CHEBI:456216"/>
        <dbReference type="EC" id="2.7.1.170"/>
    </reaction>
</comment>
<comment type="pathway">
    <text evidence="1">Amino-sugar metabolism; 1,6-anhydro-N-acetylmuramate degradation.</text>
</comment>
<comment type="pathway">
    <text evidence="1">Cell wall biogenesis; peptidoglycan recycling.</text>
</comment>
<comment type="similarity">
    <text evidence="1">Belongs to the anhydro-N-acetylmuramic acid kinase family.</text>
</comment>
<reference key="1">
    <citation type="journal article" date="2006" name="Genome Biol.">
        <title>The genome of Rhizobium leguminosarum has recognizable core and accessory components.</title>
        <authorList>
            <person name="Young J.P.W."/>
            <person name="Crossman L.C."/>
            <person name="Johnston A.W.B."/>
            <person name="Thomson N.R."/>
            <person name="Ghazoui Z.F."/>
            <person name="Hull K.H."/>
            <person name="Wexler M."/>
            <person name="Curson A.R.J."/>
            <person name="Todd J.D."/>
            <person name="Poole P.S."/>
            <person name="Mauchline T.H."/>
            <person name="East A.K."/>
            <person name="Quail M.A."/>
            <person name="Churcher C."/>
            <person name="Arrowsmith C."/>
            <person name="Cherevach I."/>
            <person name="Chillingworth T."/>
            <person name="Clarke K."/>
            <person name="Cronin A."/>
            <person name="Davis P."/>
            <person name="Fraser A."/>
            <person name="Hance Z."/>
            <person name="Hauser H."/>
            <person name="Jagels K."/>
            <person name="Moule S."/>
            <person name="Mungall K."/>
            <person name="Norbertczak H."/>
            <person name="Rabbinowitsch E."/>
            <person name="Sanders M."/>
            <person name="Simmonds M."/>
            <person name="Whitehead S."/>
            <person name="Parkhill J."/>
        </authorList>
    </citation>
    <scope>NUCLEOTIDE SEQUENCE [LARGE SCALE GENOMIC DNA]</scope>
    <source>
        <strain>DSM 114642 / LMG 32736 / 3841</strain>
    </source>
</reference>